<reference key="1">
    <citation type="journal article" date="1984" name="Nucleic Acids Res.">
        <title>The nucleotide sequence of the cloned nusA gene and its flanking region of Escherichia coli.</title>
        <authorList>
            <person name="Ishii S."/>
            <person name="Ihara M."/>
            <person name="Maekawa T."/>
            <person name="Nakamura Y."/>
            <person name="Uchida H."/>
            <person name="Imamoto F."/>
        </authorList>
    </citation>
    <scope>NUCLEOTIDE SEQUENCE [GENOMIC DNA]</scope>
</reference>
<reference key="2">
    <citation type="journal article" date="1986" name="Mol. Gen. Genet.">
        <title>Revised sequence of the nusA gene of Escherichia coli and identification of nusA11 (ts) and nusA1 mutations which cause changes in a hydrophobic amino acid cluster.</title>
        <authorList>
            <person name="Saito M."/>
            <person name="Tsugawa A."/>
            <person name="Egawa K."/>
            <person name="Nakamura Y."/>
        </authorList>
    </citation>
    <scope>SEQUENCE REVISION</scope>
</reference>
<reference key="3">
    <citation type="journal article" date="1991" name="J. Bacteriol.">
        <title>Genetic interaction between the beta' subunit of RNA polymerase and the arginine-rich domain of Escherichia coli nusA protein.</title>
        <authorList>
            <person name="Ito K."/>
            <person name="Egawa K."/>
            <person name="Nakamura Y."/>
        </authorList>
    </citation>
    <scope>SEQUENCE REVISION</scope>
    <scope>PARTIAL PROTEIN SEQUENCE</scope>
    <scope>INDUCTION</scope>
    <scope>MUTAGENESIS OF ARG-104; GLY-181; LEU-183 AND GLU-212</scope>
</reference>
<reference key="4">
    <citation type="journal article" date="1997" name="Science">
        <title>The complete genome sequence of Escherichia coli K-12.</title>
        <authorList>
            <person name="Blattner F.R."/>
            <person name="Plunkett G. III"/>
            <person name="Bloch C.A."/>
            <person name="Perna N.T."/>
            <person name="Burland V."/>
            <person name="Riley M."/>
            <person name="Collado-Vides J."/>
            <person name="Glasner J.D."/>
            <person name="Rode C.K."/>
            <person name="Mayhew G.F."/>
            <person name="Gregor J."/>
            <person name="Davis N.W."/>
            <person name="Kirkpatrick H.A."/>
            <person name="Goeden M.A."/>
            <person name="Rose D.J."/>
            <person name="Mau B."/>
            <person name="Shao Y."/>
        </authorList>
    </citation>
    <scope>NUCLEOTIDE SEQUENCE [LARGE SCALE GENOMIC DNA]</scope>
    <source>
        <strain>K12 / MG1655 / ATCC 47076</strain>
    </source>
</reference>
<reference key="5">
    <citation type="journal article" date="2006" name="Mol. Syst. Biol.">
        <title>Highly accurate genome sequences of Escherichia coli K-12 strains MG1655 and W3110.</title>
        <authorList>
            <person name="Hayashi K."/>
            <person name="Morooka N."/>
            <person name="Yamamoto Y."/>
            <person name="Fujita K."/>
            <person name="Isono K."/>
            <person name="Choi S."/>
            <person name="Ohtsubo E."/>
            <person name="Baba T."/>
            <person name="Wanner B.L."/>
            <person name="Mori H."/>
            <person name="Horiuchi T."/>
        </authorList>
    </citation>
    <scope>NUCLEOTIDE SEQUENCE [LARGE SCALE GENOMIC DNA]</scope>
    <source>
        <strain>K12 / W3110 / ATCC 27325 / DSM 5911</strain>
    </source>
</reference>
<reference key="6">
    <citation type="journal article" date="1997" name="Electrophoresis">
        <title>Comparing the predicted and observed properties of proteins encoded in the genome of Escherichia coli K-12.</title>
        <authorList>
            <person name="Link A.J."/>
            <person name="Robison K."/>
            <person name="Church G.M."/>
        </authorList>
    </citation>
    <scope>PROTEIN SEQUENCE OF 1-13</scope>
    <source>
        <strain>K12 / EMG2</strain>
    </source>
</reference>
<reference key="7">
    <citation type="journal article" date="1980" name="Proc. Natl. Acad. Sci. U.S.A.">
        <title>L factor that is required for beta-galactosidase synthesis is the nusA gene product involved in transcription termination.</title>
        <authorList>
            <person name="Greenblatt J."/>
            <person name="Li J."/>
            <person name="Adhya S."/>
            <person name="Friedman D.I."/>
            <person name="Baron L.S."/>
            <person name="Redfield B."/>
            <person name="Kung H.F."/>
            <person name="Weissbach H."/>
        </authorList>
    </citation>
    <scope>IDENTIFICATION AS L FACTOR</scope>
    <scope>INTERACTION WITH N PROTEIN</scope>
</reference>
<reference key="8">
    <citation type="journal article" date="1981" name="Cell">
        <title>Interaction of the sigma factor and the nusA gene protein of E. coli with RNA polymerase in the initiation-termination cycle of transcription.</title>
        <authorList>
            <person name="Greenblatt J."/>
            <person name="Li J."/>
        </authorList>
    </citation>
    <scope>FUNCTION</scope>
    <scope>INTERACTION WITH RNA POLYMERASE</scope>
</reference>
<reference key="9">
    <citation type="journal article" date="1981" name="Nature">
        <title>Termination of transcription by nusA gene protein of Escherichia coli.</title>
        <authorList>
            <person name="Greenblatt J."/>
            <person name="McLimont M."/>
            <person name="Hanly S."/>
        </authorList>
    </citation>
    <scope>FUNCTION</scope>
</reference>
<reference key="10">
    <citation type="journal article" date="1996" name="Mol. Microbiol.">
        <title>RbfA, a 30S ribosomal binding factor, is a cold-shock protein whose absence triggers the cold-shock response.</title>
        <authorList>
            <person name="Jones P.G."/>
            <person name="Inouye M."/>
        </authorList>
    </citation>
    <scope>INDUCTION BY COLD-SHOCK</scope>
    <source>
        <strain>CSH142</strain>
    </source>
</reference>
<reference key="11">
    <citation type="journal article" date="1984" name="Biochemistry">
        <title>Amplification and isolation of Escherichia coli nusA protein and studies of its effects on in vitro RNA chain elongation.</title>
        <authorList>
            <person name="Schmidt M.C."/>
            <person name="Chamberlin M.J."/>
        </authorList>
    </citation>
    <scope>FUNCTION</scope>
    <source>
        <strain>K12</strain>
    </source>
</reference>
<reference key="12">
    <citation type="journal article" date="1984" name="J. Biol. Chem.">
        <title>Binding of rho factor to Escherichia coli RNA polymerase mediated by nusA protein.</title>
        <authorList>
            <person name="Schmidt M.C."/>
            <person name="Chamberlin M.J."/>
        </authorList>
    </citation>
    <scope>INTERACTION WITH RHO</scope>
</reference>
<reference key="13">
    <citation type="journal article" date="1985" name="Nucleic Acids Res.">
        <title>Effect of NusA protein on expression of the nusA,infB operon in E. coli.</title>
        <authorList>
            <person name="Plumbridge J.A."/>
            <person name="Dondon J."/>
            <person name="Nakamura Y."/>
            <person name="Grunberg-Manago M."/>
        </authorList>
    </citation>
    <scope>INDUCTION</scope>
</reference>
<reference key="14">
    <citation type="journal article" date="1987" name="J. Mol. Biol.">
        <title>nusA protein of Escherichia coli is an efficient transcription termination factor for certain terminator sites.</title>
        <authorList>
            <person name="Schmidt M.C."/>
            <person name="Chamberlin M.J."/>
        </authorList>
    </citation>
    <scope>FUNCTION</scope>
    <source>
        <strain>K12</strain>
    </source>
</reference>
<reference key="15">
    <citation type="journal article" date="1991" name="J. Mol. Biol.">
        <title>Escherichia coli sigma 70 and NusA proteins. I. Binding interactions with core RNA polymerase in solution and within the transcription complex.</title>
        <authorList>
            <person name="Gill S.C."/>
            <person name="Weitzel S.E."/>
            <person name="von Hippel P.H."/>
        </authorList>
    </citation>
    <scope>SUBUNIT</scope>
    <scope>INTERACTION WITH RNA POLYMERASE</scope>
</reference>
<reference key="16">
    <citation type="journal article" date="1995" name="J. Mol. Biol.">
        <title>NusA contacts nascent RNA in Escherichia coli transcription complexes.</title>
        <authorList>
            <person name="Liu K."/>
            <person name="Hanna M.M."/>
        </authorList>
    </citation>
    <scope>FUNCTION</scope>
    <scope>INTERACTION WITH NASCENT RNA</scope>
</reference>
<reference key="17">
    <citation type="journal article" date="1997" name="Electrophoresis">
        <title>Escherichia coli proteome analysis using the gene-protein database.</title>
        <authorList>
            <person name="VanBogelen R.A."/>
            <person name="Abshire K.Z."/>
            <person name="Moldover B."/>
            <person name="Olson E.R."/>
            <person name="Neidhardt F.C."/>
        </authorList>
    </citation>
    <scope>IDENTIFICATION BY 2D-GEL</scope>
</reference>
<reference key="18">
    <citation type="journal article" date="1997" name="J. Biol. Chem.">
        <title>NusA is required for ribosomal antitermination and for modulation of the transcription elongation rate of both antiterminated RNA and mRNA.</title>
        <authorList>
            <person name="Vogel U."/>
            <person name="Jensen K.F."/>
        </authorList>
    </citation>
    <scope>FUNCTION</scope>
    <source>
        <strain>K12 / MC4100 / ATCC 35695 / DSM 6574</strain>
    </source>
</reference>
<reference key="19">
    <citation type="journal article" date="2001" name="Cell">
        <title>Control of intrinsic transcription termination by N and NusA: the basic mechanisms.</title>
        <authorList>
            <person name="Gusarov I."/>
            <person name="Nudler E."/>
        </authorList>
    </citation>
    <scope>FUNCTION</scope>
</reference>
<reference key="20">
    <citation type="journal article" date="2007" name="Nucleic Acids Res.">
        <title>Visualizing the proteome of Escherichia coli: an efficient and versatile method for labeling chromosomal coding DNA sequences (CDSs) with fluorescent protein genes.</title>
        <authorList>
            <person name="Watt R.M."/>
            <person name="Wang J."/>
            <person name="Leong M."/>
            <person name="Kung H.F."/>
            <person name="Cheah K.S."/>
            <person name="Liu D."/>
            <person name="Danchin A."/>
            <person name="Huang J.D."/>
        </authorList>
    </citation>
    <scope>SUBCELLULAR LOCATION</scope>
</reference>
<reference key="21">
    <citation type="journal article" date="2010" name="Proc. Natl. Acad. Sci. U.S.A.">
        <title>Roles for the transcription elongation factor NusA in both DNA repair and damage tolerance pathways in Escherichia coli.</title>
        <authorList>
            <person name="Cohen S.E."/>
            <person name="Lewis C.A."/>
            <person name="Mooney R.A."/>
            <person name="Kohanski M.A."/>
            <person name="Collins J.J."/>
            <person name="Landick R."/>
            <person name="Walker G.C."/>
        </authorList>
    </citation>
    <scope>FUNCTION IN DNA REPAIR</scope>
    <scope>DISRUPTION PHENOTYPE</scope>
</reference>
<reference key="22">
    <citation type="journal article" date="2011" name="Transcription">
        <title>The role of E. coli Nus-factors in transcription regulation and transcription:translation coupling: From structure to mechanism.</title>
        <authorList>
            <person name="Burmann B.M."/>
            <person name="Rosch P."/>
        </authorList>
    </citation>
    <scope>REVIEW</scope>
    <scope>FUNCTION</scope>
    <scope>DOMAIN</scope>
</reference>
<reference key="23">
    <citation type="journal article" date="2019" name="Nucleic Acids Res.">
        <title>SuhB is an integral part of the ribosomal antitermination complex and interacts with NusA.</title>
        <authorList>
            <person name="Dudenhoeffer B.R."/>
            <person name="Schneider H."/>
            <person name="Schweimer K."/>
            <person name="Knauer S.H."/>
        </authorList>
    </citation>
    <scope>FUNCTION</scope>
    <scope>INTERACTION WITH SUHB</scope>
    <scope>INTERACTION WITH RPOA</scope>
    <scope>DOMAIN</scope>
</reference>
<reference key="24">
    <citation type="journal article" date="2020" name="Sci. Rep.">
        <title>NusA directly interacts with antitermination factor Q from phage lambda.</title>
        <authorList>
            <person name="Dudenhoeffer B.R."/>
            <person name="Borggraefe J."/>
            <person name="Schweimer K."/>
            <person name="Knauer S.H."/>
        </authorList>
    </citation>
    <scope>INTERACTION WITH ESCHERICHIA PHAGE LAMBDA ANTITERMINATION PROTEIN Q (MICROBIAL INFECTION)</scope>
</reference>
<reference key="25">
    <citation type="journal article" date="2004" name="Proc. Natl. Acad. Sci. U.S.A.">
        <title>Structural basis for the interaction of Escherichia coli NusA with protein N of phage lambda.</title>
        <authorList>
            <person name="Bonin I."/>
            <person name="Muhlberger R."/>
            <person name="Bourenkov G.P."/>
            <person name="Huber R."/>
            <person name="Bacher A."/>
            <person name="Richter G."/>
            <person name="Wahl M.C."/>
        </authorList>
    </citation>
    <scope>X-RAY CRYSTALLOGRAPHY (1.90 ANGSTROMS) OF 352-421</scope>
    <scope>DOMAIN</scope>
</reference>
<reference key="26">
    <citation type="journal article" date="2005" name="Protein Sci.">
        <title>The E. coli NusA carboxy-terminal domains are structurally similar and show specific RNAP- and lambdaN interaction.</title>
        <authorList>
            <person name="Eisenmann A."/>
            <person name="Schwarz S."/>
            <person name="Prasch S."/>
            <person name="Schweimer K."/>
            <person name="Rosch P."/>
        </authorList>
    </citation>
    <scope>STRUCTURE BY NMR OF 351-426</scope>
    <scope>DOMAIN</scope>
</reference>
<reference key="27">
    <citation type="submission" date="2008-01" db="PDB data bank">
        <title>structural basis of transcription elongation control: the NusA-aCTD complex.</title>
        <authorList>
            <person name="Prasch S."/>
            <person name="Schweimer K."/>
            <person name="Roesch P."/>
        </authorList>
    </citation>
    <scope>STRUCTURE BY NMR OF 424-495</scope>
</reference>
<reference key="28">
    <citation type="submission" date="2010-04" db="PDB data bank">
        <title>Solution structure of the aminoterminal domain of E. coli NusA.</title>
        <authorList>
            <person name="Jurk M."/>
            <person name="Schweimer K."/>
            <person name="Roesch P."/>
        </authorList>
    </citation>
    <scope>STRUCTURE BY NMR OF 1-125</scope>
</reference>
<reference evidence="27" key="29">
    <citation type="journal article" date="2019" name="Nucleic Acids Res.">
        <title>Structural basis for the function of SuhB as a transcription factor in ribosomal RNA synthesis.</title>
        <authorList>
            <person name="Huang Y.H."/>
            <person name="Said N."/>
            <person name="Loll B."/>
            <person name="Wahl M.C."/>
        </authorList>
    </citation>
    <scope>X-RAY CRYSTALLOGRAPHY (1.65 ANGSTROMS) OF 427-495 IN COMPLEX WITH SUHB</scope>
    <scope>FUNCTION</scope>
    <scope>SUBUNIT</scope>
    <scope>INTERACTION WITH RPOA</scope>
    <scope>INTERACTION WITH SUHB</scope>
    <scope>DOMAIN</scope>
    <source>
        <strain>K12 / DH5-alpha</strain>
    </source>
</reference>
<reference evidence="28 29" key="30">
    <citation type="journal article" date="2020" name="Mol. Cell">
        <title>Structure-Based Mechanisms of a Molecular RNA Polymerase/Chaperone Machine Required for Ribosome Biosynthesis.</title>
        <authorList>
            <person name="Huang Y.H."/>
            <person name="Hilal T."/>
            <person name="Loll B."/>
            <person name="Buerger J."/>
            <person name="Mielke T."/>
            <person name="Boettcher C."/>
            <person name="Said N."/>
            <person name="Wahl M.C."/>
        </authorList>
    </citation>
    <scope>STRUCTURE BY ELECTRON MICROSCOPY (3.80 ANGSTROMS) OF RRNA TRANSCRIPTION-ELONGATION-ANTITERMINATION COMPLEXES WITH AND WITHOUT S4</scope>
    <scope>FUNCTION</scope>
    <scope>SUBUNIT</scope>
</reference>
<sequence length="495" mass="54871">MNKEILAVVEAVSNEKALPREKIFEALESALATATKKKYEQEIDVRVQIDRKSGDFDTFRRWLVVDEVTQPTKEITLEAARYEDESLNLGDYVEDQIESVTFDRITTQTAKQVIVQKVREAERAMVVDQFREHEGEIITGVVKKVNRDNISLDLGNNAEAVILREDMLPRENFRPGDRVRGVLYSVRPEARGAQLFVTRSKPEMLIELFRIEVPEIGEEVIEIKAAARDPGSRAKIAVKTNDKRIDPVGACVGMRGARVQAVSTELGGERIDIVLWDDNPAQFVINAMAPADVASIVVDEDKHTMDIAVEAGNLAQAIGRNGQNVRLASQLSGWELNVMTVDDLQAKHQAEAHAAIDTFTKYLDIDEDFATVLVEEGFSTLEELAYVPMKELLEIEGLDEPTVEALRERAKNALATIAQAQEESLGDNKPADDLLNLEGVDRDLAFKLAARGVCTLEDLAEQGIDDLADIEGLTDEKAGALIMAARNICWFGDEA</sequence>
<gene>
    <name evidence="1" type="primary">nusA</name>
    <name type="ordered locus">b3169</name>
    <name type="ordered locus">JW3138</name>
</gene>
<feature type="chain" id="PRO_0000181965" description="Transcription termination/antitermination protein NusA">
    <location>
        <begin position="1"/>
        <end position="495"/>
    </location>
</feature>
<feature type="domain" description="S1 motif" evidence="1">
    <location>
        <begin position="135"/>
        <end position="200"/>
    </location>
</feature>
<feature type="domain" description="KH 1" evidence="1">
    <location>
        <begin position="230"/>
        <end position="293"/>
    </location>
</feature>
<feature type="domain" description="KH 2" evidence="1">
    <location>
        <begin position="302"/>
        <end position="368"/>
    </location>
</feature>
<feature type="repeat" description="1">
    <location>
        <begin position="364"/>
        <end position="414"/>
    </location>
</feature>
<feature type="repeat" description="2">
    <location>
        <begin position="439"/>
        <end position="489"/>
    </location>
</feature>
<feature type="region of interest" description="N-terminal domain (NTD) interacts with RNAP" evidence="26">
    <location>
        <begin position="1"/>
        <end position="137"/>
    </location>
</feature>
<feature type="region of interest" description="Acidic repeat 1 (AR1)" evidence="26">
    <location>
        <begin position="345"/>
        <end position="426"/>
    </location>
</feature>
<feature type="region of interest" description="2 X 51 AA approximate repeats">
    <location>
        <begin position="364"/>
        <end position="489"/>
    </location>
</feature>
<feature type="region of interest" description="Acidic repeat 2 (AR2), required for interaction with SuhB, interacts with RNAP subunit alpha (rpoA), NusG" evidence="12 13 26">
    <location>
        <begin position="427"/>
        <end position="495"/>
    </location>
</feature>
<feature type="mutagenesis site" description="In nusA10-1." evidence="6">
    <original>R</original>
    <variation>H</variation>
    <location>
        <position position="104"/>
    </location>
</feature>
<feature type="mutagenesis site" description="In nusa11; inability to terminate transcription normally at termination sites." evidence="6">
    <original>G</original>
    <variation>D</variation>
    <location>
        <position position="181"/>
    </location>
</feature>
<feature type="mutagenesis site" description="In nusA1; restricts lambda growth by preventing antitermination activity of lambda N protein." evidence="6">
    <original>L</original>
    <variation>R</variation>
    <location>
        <position position="183"/>
    </location>
</feature>
<feature type="mutagenesis site" description="In nusA10-2." evidence="6">
    <original>E</original>
    <variation>K</variation>
    <location>
        <position position="212"/>
    </location>
</feature>
<feature type="sequence conflict" description="In Ref. 1; CAA25200." evidence="25" ref="1">
    <original>MLPRENFRPGDRVRGVLYSVRPEAR</original>
    <variation>SCRVKTFALATAFVACSIPFARNG</variation>
    <location>
        <begin position="167"/>
        <end position="191"/>
    </location>
</feature>
<feature type="helix" evidence="34">
    <location>
        <begin position="3"/>
        <end position="11"/>
    </location>
</feature>
<feature type="strand" evidence="34">
    <location>
        <begin position="16"/>
        <end position="18"/>
    </location>
</feature>
<feature type="helix" evidence="34">
    <location>
        <begin position="20"/>
        <end position="38"/>
    </location>
</feature>
<feature type="strand" evidence="34">
    <location>
        <begin position="39"/>
        <end position="41"/>
    </location>
</feature>
<feature type="strand" evidence="34">
    <location>
        <begin position="44"/>
        <end position="49"/>
    </location>
</feature>
<feature type="turn" evidence="34">
    <location>
        <begin position="51"/>
        <end position="53"/>
    </location>
</feature>
<feature type="strand" evidence="34">
    <location>
        <begin position="56"/>
        <end position="64"/>
    </location>
</feature>
<feature type="turn" evidence="37">
    <location>
        <begin position="71"/>
        <end position="73"/>
    </location>
</feature>
<feature type="strand" evidence="33">
    <location>
        <begin position="74"/>
        <end position="76"/>
    </location>
</feature>
<feature type="helix" evidence="34">
    <location>
        <begin position="79"/>
        <end position="83"/>
    </location>
</feature>
<feature type="strand" evidence="33">
    <location>
        <begin position="92"/>
        <end position="96"/>
    </location>
</feature>
<feature type="helix" evidence="33">
    <location>
        <begin position="102"/>
        <end position="104"/>
    </location>
</feature>
<feature type="helix" evidence="35">
    <location>
        <begin position="110"/>
        <end position="132"/>
    </location>
</feature>
<feature type="turn" evidence="35">
    <location>
        <begin position="133"/>
        <end position="135"/>
    </location>
</feature>
<feature type="strand" evidence="35">
    <location>
        <begin position="136"/>
        <end position="145"/>
    </location>
</feature>
<feature type="strand" evidence="35">
    <location>
        <begin position="147"/>
        <end position="153"/>
    </location>
</feature>
<feature type="strand" evidence="35">
    <location>
        <begin position="159"/>
        <end position="163"/>
    </location>
</feature>
<feature type="helix" evidence="35">
    <location>
        <begin position="164"/>
        <end position="166"/>
    </location>
</feature>
<feature type="strand" evidence="35">
    <location>
        <begin position="178"/>
        <end position="186"/>
    </location>
</feature>
<feature type="strand" evidence="34">
    <location>
        <begin position="190"/>
        <end position="192"/>
    </location>
</feature>
<feature type="strand" evidence="35">
    <location>
        <begin position="195"/>
        <end position="201"/>
    </location>
</feature>
<feature type="helix" evidence="35">
    <location>
        <begin position="202"/>
        <end position="212"/>
    </location>
</feature>
<feature type="helix" evidence="35">
    <location>
        <begin position="214"/>
        <end position="217"/>
    </location>
</feature>
<feature type="strand" evidence="35">
    <location>
        <begin position="220"/>
        <end position="229"/>
    </location>
</feature>
<feature type="turn" evidence="35">
    <location>
        <begin position="230"/>
        <end position="232"/>
    </location>
</feature>
<feature type="strand" evidence="35">
    <location>
        <begin position="233"/>
        <end position="240"/>
    </location>
</feature>
<feature type="strand" evidence="37">
    <location>
        <begin position="243"/>
        <end position="245"/>
    </location>
</feature>
<feature type="helix" evidence="35">
    <location>
        <begin position="247"/>
        <end position="252"/>
    </location>
</feature>
<feature type="helix" evidence="35">
    <location>
        <begin position="254"/>
        <end position="256"/>
    </location>
</feature>
<feature type="helix" evidence="35">
    <location>
        <begin position="257"/>
        <end position="265"/>
    </location>
</feature>
<feature type="turn" evidence="35">
    <location>
        <begin position="266"/>
        <end position="268"/>
    </location>
</feature>
<feature type="strand" evidence="35">
    <location>
        <begin position="270"/>
        <end position="275"/>
    </location>
</feature>
<feature type="helix" evidence="35">
    <location>
        <begin position="280"/>
        <end position="287"/>
    </location>
</feature>
<feature type="turn" evidence="35">
    <location>
        <begin position="288"/>
        <end position="290"/>
    </location>
</feature>
<feature type="strand" evidence="35">
    <location>
        <begin position="293"/>
        <end position="299"/>
    </location>
</feature>
<feature type="turn" evidence="35">
    <location>
        <begin position="300"/>
        <end position="303"/>
    </location>
</feature>
<feature type="strand" evidence="35">
    <location>
        <begin position="304"/>
        <end position="309"/>
    </location>
</feature>
<feature type="helix" evidence="35">
    <location>
        <begin position="314"/>
        <end position="318"/>
    </location>
</feature>
<feature type="helix" evidence="35">
    <location>
        <begin position="320"/>
        <end position="322"/>
    </location>
</feature>
<feature type="helix" evidence="35">
    <location>
        <begin position="323"/>
        <end position="332"/>
    </location>
</feature>
<feature type="strand" evidence="35">
    <location>
        <begin position="335"/>
        <end position="340"/>
    </location>
</feature>
<feature type="helix" evidence="30">
    <location>
        <begin position="354"/>
        <end position="363"/>
    </location>
</feature>
<feature type="helix" evidence="30">
    <location>
        <begin position="367"/>
        <end position="375"/>
    </location>
</feature>
<feature type="helix" evidence="30">
    <location>
        <begin position="381"/>
        <end position="386"/>
    </location>
</feature>
<feature type="helix" evidence="30">
    <location>
        <begin position="389"/>
        <end position="392"/>
    </location>
</feature>
<feature type="strand" evidence="34">
    <location>
        <begin position="395"/>
        <end position="397"/>
    </location>
</feature>
<feature type="helix" evidence="30">
    <location>
        <begin position="400"/>
        <end position="417"/>
    </location>
</feature>
<feature type="helix" evidence="36">
    <location>
        <begin position="432"/>
        <end position="435"/>
    </location>
</feature>
<feature type="helix" evidence="36">
    <location>
        <begin position="442"/>
        <end position="450"/>
    </location>
</feature>
<feature type="helix" evidence="36">
    <location>
        <begin position="456"/>
        <end position="460"/>
    </location>
</feature>
<feature type="helix" evidence="36">
    <location>
        <begin position="464"/>
        <end position="467"/>
    </location>
</feature>
<feature type="strand" evidence="31">
    <location>
        <begin position="470"/>
        <end position="472"/>
    </location>
</feature>
<feature type="helix" evidence="36">
    <location>
        <begin position="475"/>
        <end position="489"/>
    </location>
</feature>
<feature type="turn" evidence="32">
    <location>
        <begin position="491"/>
        <end position="493"/>
    </location>
</feature>
<proteinExistence type="evidence at protein level"/>
<organism>
    <name type="scientific">Escherichia coli (strain K12)</name>
    <dbReference type="NCBI Taxonomy" id="83333"/>
    <lineage>
        <taxon>Bacteria</taxon>
        <taxon>Pseudomonadati</taxon>
        <taxon>Pseudomonadota</taxon>
        <taxon>Gammaproteobacteria</taxon>
        <taxon>Enterobacterales</taxon>
        <taxon>Enterobacteriaceae</taxon>
        <taxon>Escherichia</taxon>
    </lineage>
</organism>
<keyword id="KW-0002">3D-structure</keyword>
<keyword id="KW-0963">Cytoplasm</keyword>
<keyword id="KW-0903">Direct protein sequencing</keyword>
<keyword id="KW-0945">Host-virus interaction</keyword>
<keyword id="KW-1185">Reference proteome</keyword>
<keyword id="KW-0677">Repeat</keyword>
<keyword id="KW-0690">Ribosome biogenesis</keyword>
<keyword id="KW-0694">RNA-binding</keyword>
<keyword id="KW-0346">Stress response</keyword>
<keyword id="KW-0804">Transcription</keyword>
<keyword id="KW-0889">Transcription antitermination</keyword>
<keyword id="KW-0805">Transcription regulation</keyword>
<keyword id="KW-0806">Transcription termination</keyword>
<comment type="function">
    <text evidence="1 2 8 9 10 12 13 15 18 19 20 21 23">Part of the processive rRNA transcription and antitermination complex (rrnTAC). The complex forms an RNA-chaperone ring around the RNA exit tunnel of RNA polymerase (RNAP). It supports rapid transcription and antitermination of rRNA operons, cotranscriptional rRNA folding, and annealing of distal rRNA regions to allow correct ribosome biogenesis (PubMed:32871103). Participates in both transcription termination and antitermination. Involved in a variety of cellular termination and antitermination processes, such as Rho-dependent transcriptional termination and intrinsic termination (PubMed:31020314). Domain AR2 interacts with a large number of other proteins and may serve as a platform to recruit these factors for transcriptional regulation (PubMed:31127279). Involved in phage lambda N-mediated transcriptional antitermination. Also important for coordinating the cellular responses to DNA damage by coupling the processes of nucleotide excision repair and translesion synthesis to transcription.</text>
</comment>
<comment type="subunit">
    <text evidence="1 7 12 13 16 17 19 21">Monomer. Binds directly to the core enzyme of the DNA-dependent RNA polymerase (RNAP) (PubMed:1856861, PubMed:6263495). Interacts with nascent RNA (PubMed:7536848). Interacts with the termination Rho factor (PubMed:6096352). Interacts with the phage lambda N protein (PubMed:6154941). Interacts with SuhB via the AR2 domain, crystallizes as a 2:1 SuhB:NusA heterotrimer. The rRNA transcription and antitermination complex (rrnTAC) consists of RNAP, NusA, NusB, NusE (rpsJ), NusG, SubB, ribosomal protein S4, DNA and precursor rRNA; S4 is more flexible than other subunits (PubMed:31020314, PubMed:31127279). NusG and the alpha-CTD of RNAP interact with the AR2 domain (PubMed:31127279).</text>
</comment>
<comment type="subunit">
    <text evidence="14">(Microbial infection) Interacts (via N-terminus and AR2 domain) with Escherichia phage lambda antitermination protein Q; this interaction (AR2 domain) releases the autoinhibition of NusA.</text>
</comment>
<comment type="interaction">
    <interactant intactId="EBI-551571">
        <id>P0AFF6</id>
    </interactant>
    <interactant intactId="EBI-1037359">
        <id>Q47155</id>
        <label>dinB</label>
    </interactant>
    <organismsDiffer>false</organismsDiffer>
    <experiments>3</experiments>
</comment>
<comment type="interaction">
    <interactant intactId="EBI-551571">
        <id>P0AFF6</id>
    </interactant>
    <interactant intactId="EBI-555272">
        <id>P0A8U6</id>
        <label>metJ</label>
    </interactant>
    <organismsDiffer>false</organismsDiffer>
    <experiments>3</experiments>
</comment>
<comment type="interaction">
    <interactant intactId="EBI-551571">
        <id>P0AFF6</id>
    </interactant>
    <interactant intactId="EBI-544985">
        <id>P0A7Z4</id>
        <label>rpoA</label>
    </interactant>
    <organismsDiffer>false</organismsDiffer>
    <experiments>7</experiments>
</comment>
<comment type="subcellular location">
    <subcellularLocation>
        <location evidence="1 5">Cytoplasm</location>
    </subcellularLocation>
    <text>Colocalizes with nucleoids.</text>
</comment>
<comment type="induction">
    <text evidence="6 11 22">In response to low temperature. Negatively autoregulated. Induced by cold shock (42 to 15 degrees Celsius) (at protein level) (PubMed:8898389).</text>
</comment>
<comment type="domain">
    <text evidence="3 4 9 12 13">The N-terminal region interacts with RNAP (PubMed:21922055). The central region is composed of 3 RNA binding domains, S1, KH 1 and KH 2. The C-terminal region contains 2 acidic repeats, AR1 and AR2, which bind to protein N from phage lambda during antitermination. AR2 interacts with SuhB and RNAP alpha subunit C-terminal domain (rpoA); AR2 cannot bind to both simultaneously (PubMed:31020314, PubMed:31127279). SuhB, NusG and the alpha-CTD of RNAP all interact with the AR2 domain and can displace the AR2 domain from the SSK domain (S1, KH1 and KH2) of NusA (PubMed:31127279).</text>
</comment>
<comment type="disruption phenotype">
    <text evidence="8">Mutants are sensitive to DNA-damaging agents.</text>
</comment>
<comment type="similarity">
    <text evidence="1">Belongs to the NusA family.</text>
</comment>
<name>NUSA_ECOLI</name>
<dbReference type="EMBL" id="X00513">
    <property type="protein sequence ID" value="CAA25200.1"/>
    <property type="molecule type" value="Genomic_DNA"/>
</dbReference>
<dbReference type="EMBL" id="U18997">
    <property type="protein sequence ID" value="AAA57972.1"/>
    <property type="molecule type" value="Genomic_DNA"/>
</dbReference>
<dbReference type="EMBL" id="U00096">
    <property type="protein sequence ID" value="AAC76203.1"/>
    <property type="molecule type" value="Genomic_DNA"/>
</dbReference>
<dbReference type="EMBL" id="AP009048">
    <property type="protein sequence ID" value="BAE77215.1"/>
    <property type="molecule type" value="Genomic_DNA"/>
</dbReference>
<dbReference type="PIR" id="E65107">
    <property type="entry name" value="FJEC"/>
</dbReference>
<dbReference type="RefSeq" id="NP_417638.1">
    <property type="nucleotide sequence ID" value="NC_000913.3"/>
</dbReference>
<dbReference type="RefSeq" id="WP_001031057.1">
    <property type="nucleotide sequence ID" value="NZ_STEB01000012.1"/>
</dbReference>
<dbReference type="PDB" id="1U9L">
    <property type="method" value="X-ray"/>
    <property type="resolution" value="1.90 A"/>
    <property type="chains" value="A/B=352-421"/>
</dbReference>
<dbReference type="PDB" id="1WCL">
    <property type="method" value="NMR"/>
    <property type="chains" value="A=351-426"/>
</dbReference>
<dbReference type="PDB" id="1WCN">
    <property type="method" value="NMR"/>
    <property type="chains" value="A=426-495"/>
</dbReference>
<dbReference type="PDB" id="2JZB">
    <property type="method" value="NMR"/>
    <property type="chains" value="B=424-495"/>
</dbReference>
<dbReference type="PDB" id="2KWP">
    <property type="method" value="NMR"/>
    <property type="chains" value="A=1-125"/>
</dbReference>
<dbReference type="PDB" id="5LM7">
    <property type="method" value="X-ray"/>
    <property type="resolution" value="3.35 A"/>
    <property type="chains" value="A/C=1-426"/>
</dbReference>
<dbReference type="PDB" id="5LM9">
    <property type="method" value="X-ray"/>
    <property type="resolution" value="2.14 A"/>
    <property type="chains" value="A=101-426"/>
</dbReference>
<dbReference type="PDB" id="5MS0">
    <property type="method" value="EM"/>
    <property type="resolution" value="9.80 A"/>
    <property type="chains" value="M=1-495"/>
</dbReference>
<dbReference type="PDB" id="6FLQ">
    <property type="method" value="EM"/>
    <property type="resolution" value="4.10 A"/>
    <property type="chains" value="F=1-495"/>
</dbReference>
<dbReference type="PDB" id="6GOV">
    <property type="method" value="EM"/>
    <property type="resolution" value="3.70 A"/>
    <property type="chains" value="A=1-495"/>
</dbReference>
<dbReference type="PDB" id="6IB8">
    <property type="method" value="X-ray"/>
    <property type="resolution" value="1.65 A"/>
    <property type="chains" value="C=427-495"/>
</dbReference>
<dbReference type="PDB" id="6TQN">
    <property type="method" value="EM"/>
    <property type="resolution" value="3.80 A"/>
    <property type="chains" value="A=1-495"/>
</dbReference>
<dbReference type="PDB" id="6TQO">
    <property type="method" value="EM"/>
    <property type="resolution" value="4.00 A"/>
    <property type="chains" value="A=1-495"/>
</dbReference>
<dbReference type="PDB" id="6X6T">
    <property type="method" value="EM"/>
    <property type="resolution" value="3.20 A"/>
    <property type="chains" value="AG=1-495"/>
</dbReference>
<dbReference type="PDB" id="6X7F">
    <property type="method" value="EM"/>
    <property type="resolution" value="3.50 A"/>
    <property type="chains" value="AG=1-495"/>
</dbReference>
<dbReference type="PDB" id="6X7K">
    <property type="method" value="EM"/>
    <property type="resolution" value="3.10 A"/>
    <property type="chains" value="AG=1-495"/>
</dbReference>
<dbReference type="PDB" id="6X9Q">
    <property type="method" value="EM"/>
    <property type="resolution" value="4.80 A"/>
    <property type="chains" value="AG=1-495"/>
</dbReference>
<dbReference type="PDB" id="6XAS">
    <property type="method" value="EM"/>
    <property type="resolution" value="3.80 A"/>
    <property type="chains" value="G=1-495"/>
</dbReference>
<dbReference type="PDB" id="6XAV">
    <property type="method" value="EM"/>
    <property type="resolution" value="7.70 A"/>
    <property type="chains" value="G=1-495"/>
</dbReference>
<dbReference type="PDB" id="6XDQ">
    <property type="method" value="EM"/>
    <property type="resolution" value="3.70 A"/>
    <property type="chains" value="AG=1-495"/>
</dbReference>
<dbReference type="PDB" id="6Z9P">
    <property type="method" value="EM"/>
    <property type="resolution" value="3.90 A"/>
    <property type="chains" value="A=1-495"/>
</dbReference>
<dbReference type="PDB" id="6Z9Q">
    <property type="method" value="EM"/>
    <property type="resolution" value="5.70 A"/>
    <property type="chains" value="A=1-495"/>
</dbReference>
<dbReference type="PDB" id="6Z9R">
    <property type="method" value="EM"/>
    <property type="resolution" value="4.10 A"/>
    <property type="chains" value="A=1-495"/>
</dbReference>
<dbReference type="PDB" id="6Z9S">
    <property type="method" value="EM"/>
    <property type="resolution" value="4.40 A"/>
    <property type="chains" value="A=1-495"/>
</dbReference>
<dbReference type="PDB" id="6Z9T">
    <property type="method" value="EM"/>
    <property type="resolution" value="4.10 A"/>
    <property type="chains" value="A=1-495"/>
</dbReference>
<dbReference type="PDB" id="7ADB">
    <property type="method" value="EM"/>
    <property type="resolution" value="4.40 A"/>
    <property type="chains" value="A=1-495"/>
</dbReference>
<dbReference type="PDB" id="7ADC">
    <property type="method" value="EM"/>
    <property type="resolution" value="4.00 A"/>
    <property type="chains" value="A=1-495"/>
</dbReference>
<dbReference type="PDB" id="7ADD">
    <property type="method" value="EM"/>
    <property type="resolution" value="4.30 A"/>
    <property type="chains" value="A=1-495"/>
</dbReference>
<dbReference type="PDB" id="7ADE">
    <property type="method" value="EM"/>
    <property type="resolution" value="4.20 A"/>
    <property type="chains" value="A=1-495"/>
</dbReference>
<dbReference type="PDB" id="7PY3">
    <property type="method" value="EM"/>
    <property type="resolution" value="3.80 A"/>
    <property type="chains" value="F=1-495"/>
</dbReference>
<dbReference type="PDB" id="7PY5">
    <property type="method" value="EM"/>
    <property type="resolution" value="3.90 A"/>
    <property type="chains" value="F=1-495"/>
</dbReference>
<dbReference type="PDB" id="7PY6">
    <property type="method" value="EM"/>
    <property type="resolution" value="4.10 A"/>
    <property type="chains" value="F=1-495"/>
</dbReference>
<dbReference type="PDB" id="7PY7">
    <property type="method" value="EM"/>
    <property type="resolution" value="4.10 A"/>
    <property type="chains" value="F=1-495"/>
</dbReference>
<dbReference type="PDB" id="7PYJ">
    <property type="method" value="EM"/>
    <property type="resolution" value="4.20 A"/>
    <property type="chains" value="F=1-495"/>
</dbReference>
<dbReference type="PDB" id="7PYK">
    <property type="method" value="EM"/>
    <property type="resolution" value="4.10 A"/>
    <property type="chains" value="F=1-495"/>
</dbReference>
<dbReference type="PDB" id="7UBN">
    <property type="method" value="EM"/>
    <property type="resolution" value="3.36 A"/>
    <property type="chains" value="N=1-495"/>
</dbReference>
<dbReference type="PDB" id="8PIL">
    <property type="method" value="EM"/>
    <property type="resolution" value="3.20 A"/>
    <property type="chains" value="F=1-495"/>
</dbReference>
<dbReference type="PDB" id="8UQM">
    <property type="method" value="EM"/>
    <property type="resolution" value="5.30 A"/>
    <property type="chains" value="AG=1-495"/>
</dbReference>
<dbReference type="PDB" id="8UR0">
    <property type="method" value="EM"/>
    <property type="resolution" value="3.40 A"/>
    <property type="chains" value="AG=1-495"/>
</dbReference>
<dbReference type="PDB" id="8URI">
    <property type="method" value="EM"/>
    <property type="resolution" value="5.30 A"/>
    <property type="chains" value="AG=1-495"/>
</dbReference>
<dbReference type="PDB" id="8URY">
    <property type="method" value="EM"/>
    <property type="resolution" value="3.10 A"/>
    <property type="chains" value="AG=1-495"/>
</dbReference>
<dbReference type="PDBsum" id="1U9L"/>
<dbReference type="PDBsum" id="1WCL"/>
<dbReference type="PDBsum" id="1WCN"/>
<dbReference type="PDBsum" id="2JZB"/>
<dbReference type="PDBsum" id="2KWP"/>
<dbReference type="PDBsum" id="5LM7"/>
<dbReference type="PDBsum" id="5LM9"/>
<dbReference type="PDBsum" id="5MS0"/>
<dbReference type="PDBsum" id="6FLQ"/>
<dbReference type="PDBsum" id="6GOV"/>
<dbReference type="PDBsum" id="6IB8"/>
<dbReference type="PDBsum" id="6TQN"/>
<dbReference type="PDBsum" id="6TQO"/>
<dbReference type="PDBsum" id="6X6T"/>
<dbReference type="PDBsum" id="6X7F"/>
<dbReference type="PDBsum" id="6X7K"/>
<dbReference type="PDBsum" id="6X9Q"/>
<dbReference type="PDBsum" id="6XAS"/>
<dbReference type="PDBsum" id="6XAV"/>
<dbReference type="PDBsum" id="6XDQ"/>
<dbReference type="PDBsum" id="6Z9P"/>
<dbReference type="PDBsum" id="6Z9Q"/>
<dbReference type="PDBsum" id="6Z9R"/>
<dbReference type="PDBsum" id="6Z9S"/>
<dbReference type="PDBsum" id="6Z9T"/>
<dbReference type="PDBsum" id="7ADB"/>
<dbReference type="PDBsum" id="7ADC"/>
<dbReference type="PDBsum" id="7ADD"/>
<dbReference type="PDBsum" id="7ADE"/>
<dbReference type="PDBsum" id="7PY3"/>
<dbReference type="PDBsum" id="7PY5"/>
<dbReference type="PDBsum" id="7PY6"/>
<dbReference type="PDBsum" id="7PY7"/>
<dbReference type="PDBsum" id="7PYJ"/>
<dbReference type="PDBsum" id="7PYK"/>
<dbReference type="PDBsum" id="7UBN"/>
<dbReference type="PDBsum" id="8PIL"/>
<dbReference type="PDBsum" id="8UQM"/>
<dbReference type="PDBsum" id="8UR0"/>
<dbReference type="PDBsum" id="8URI"/>
<dbReference type="PDBsum" id="8URY"/>
<dbReference type="BMRB" id="P0AFF6"/>
<dbReference type="EMDB" id="EMD-11722"/>
<dbReference type="EMDB" id="EMD-11723"/>
<dbReference type="EMDB" id="EMD-11724"/>
<dbReference type="EMDB" id="EMD-13709"/>
<dbReference type="EMDB" id="EMD-13713"/>
<dbReference type="EMDB" id="EMD-13714"/>
<dbReference type="EMDB" id="EMD-13715"/>
<dbReference type="EMDB" id="EMD-13717"/>
<dbReference type="EMDB" id="EMD-13718"/>
<dbReference type="EMDB" id="EMD-17685"/>
<dbReference type="EMDB" id="EMD-22114"/>
<dbReference type="EMDB" id="EMD-22115"/>
<dbReference type="EMDB" id="EMD-3561"/>
<dbReference type="EMDB" id="EMD-4275"/>
<dbReference type="SMR" id="P0AFF6"/>
<dbReference type="BioGRID" id="4261878">
    <property type="interactions" value="35"/>
</dbReference>
<dbReference type="BioGRID" id="851995">
    <property type="interactions" value="2"/>
</dbReference>
<dbReference type="ComplexPortal" id="CPX-5674">
    <property type="entry name" value="Transcription elongation complex"/>
</dbReference>
<dbReference type="ComplexPortal" id="CPX-5780">
    <property type="entry name" value="lambdaN-dependent processive transcription antitermination complex"/>
</dbReference>
<dbReference type="DIP" id="DIP-47857N"/>
<dbReference type="FunCoup" id="P0AFF6">
    <property type="interactions" value="603"/>
</dbReference>
<dbReference type="IntAct" id="P0AFF6">
    <property type="interactions" value="45"/>
</dbReference>
<dbReference type="STRING" id="511145.b3169"/>
<dbReference type="jPOST" id="P0AFF6"/>
<dbReference type="PaxDb" id="511145-b3169"/>
<dbReference type="EnsemblBacteria" id="AAC76203">
    <property type="protein sequence ID" value="AAC76203"/>
    <property type="gene ID" value="b3169"/>
</dbReference>
<dbReference type="GeneID" id="93778814"/>
<dbReference type="GeneID" id="947682"/>
<dbReference type="KEGG" id="ecj:JW3138"/>
<dbReference type="KEGG" id="eco:b3169"/>
<dbReference type="KEGG" id="ecoc:C3026_17260"/>
<dbReference type="PATRIC" id="fig|1411691.4.peg.3561"/>
<dbReference type="EchoBASE" id="EB0659"/>
<dbReference type="eggNOG" id="COG0195">
    <property type="taxonomic scope" value="Bacteria"/>
</dbReference>
<dbReference type="HOGENOM" id="CLU_029242_0_0_6"/>
<dbReference type="InParanoid" id="P0AFF6"/>
<dbReference type="OMA" id="MKGSRIH"/>
<dbReference type="OrthoDB" id="9807233at2"/>
<dbReference type="PhylomeDB" id="P0AFF6"/>
<dbReference type="BioCyc" id="EcoCyc:EG10665-MONOMER"/>
<dbReference type="CD-CODE" id="7C5C94C0">
    <property type="entry name" value="Transcriptional condensates"/>
</dbReference>
<dbReference type="EvolutionaryTrace" id="P0AFF6"/>
<dbReference type="PRO" id="PR:P0AFF6"/>
<dbReference type="Proteomes" id="UP000000625">
    <property type="component" value="Chromosome"/>
</dbReference>
<dbReference type="GO" id="GO:0005829">
    <property type="term" value="C:cytosol"/>
    <property type="evidence" value="ECO:0000314"/>
    <property type="project" value="EcoCyc"/>
</dbReference>
<dbReference type="GO" id="GO:0008023">
    <property type="term" value="C:transcription elongation factor complex"/>
    <property type="evidence" value="ECO:0000303"/>
    <property type="project" value="ComplexPortal"/>
</dbReference>
<dbReference type="GO" id="GO:0001000">
    <property type="term" value="F:bacterial-type RNA polymerase core enzyme binding"/>
    <property type="evidence" value="ECO:0000314"/>
    <property type="project" value="CAFA"/>
</dbReference>
<dbReference type="GO" id="GO:0003700">
    <property type="term" value="F:DNA-binding transcription factor activity"/>
    <property type="evidence" value="ECO:0007669"/>
    <property type="project" value="InterPro"/>
</dbReference>
<dbReference type="GO" id="GO:0000166">
    <property type="term" value="F:nucleotide binding"/>
    <property type="evidence" value="ECO:0007669"/>
    <property type="project" value="InterPro"/>
</dbReference>
<dbReference type="GO" id="GO:0019904">
    <property type="term" value="F:protein domain specific binding"/>
    <property type="evidence" value="ECO:0000353"/>
    <property type="project" value="CAFA"/>
</dbReference>
<dbReference type="GO" id="GO:0003723">
    <property type="term" value="F:RNA binding"/>
    <property type="evidence" value="ECO:0007669"/>
    <property type="project" value="UniProtKB-UniRule"/>
</dbReference>
<dbReference type="GO" id="GO:0006353">
    <property type="term" value="P:DNA-templated transcription termination"/>
    <property type="evidence" value="ECO:0000314"/>
    <property type="project" value="CAFA"/>
</dbReference>
<dbReference type="GO" id="GO:0051259">
    <property type="term" value="P:protein complex oligomerization"/>
    <property type="evidence" value="ECO:0000314"/>
    <property type="project" value="CACAO"/>
</dbReference>
<dbReference type="GO" id="GO:0032784">
    <property type="term" value="P:regulation of DNA-templated transcription elongation"/>
    <property type="evidence" value="ECO:0000303"/>
    <property type="project" value="ComplexPortal"/>
</dbReference>
<dbReference type="GO" id="GO:0042254">
    <property type="term" value="P:ribosome biogenesis"/>
    <property type="evidence" value="ECO:0007669"/>
    <property type="project" value="UniProtKB-KW"/>
</dbReference>
<dbReference type="GO" id="GO:0031564">
    <property type="term" value="P:transcription antitermination"/>
    <property type="evidence" value="ECO:0000314"/>
    <property type="project" value="ComplexPortal"/>
</dbReference>
<dbReference type="CDD" id="cd02134">
    <property type="entry name" value="KH-II_NusA_rpt1"/>
    <property type="match status" value="1"/>
</dbReference>
<dbReference type="CDD" id="cd22529">
    <property type="entry name" value="KH-II_NusA_rpt2"/>
    <property type="match status" value="1"/>
</dbReference>
<dbReference type="CDD" id="cd04455">
    <property type="entry name" value="S1_NusA"/>
    <property type="match status" value="1"/>
</dbReference>
<dbReference type="FunFam" id="1.10.150.20:FF:000015">
    <property type="entry name" value="Transcription termination/antitermination protein NusA"/>
    <property type="match status" value="1"/>
</dbReference>
<dbReference type="FunFam" id="1.10.150.20:FF:000018">
    <property type="entry name" value="Transcription termination/antitermination protein NusA"/>
    <property type="match status" value="1"/>
</dbReference>
<dbReference type="FunFam" id="2.40.50.140:FF:000092">
    <property type="entry name" value="Transcription termination/antitermination protein NusA"/>
    <property type="match status" value="1"/>
</dbReference>
<dbReference type="FunFam" id="3.30.1480.10:FF:000001">
    <property type="entry name" value="Transcription termination/antitermination protein NusA"/>
    <property type="match status" value="1"/>
</dbReference>
<dbReference type="FunFam" id="3.30.300.20:FF:000002">
    <property type="entry name" value="Transcription termination/antitermination protein NusA"/>
    <property type="match status" value="1"/>
</dbReference>
<dbReference type="FunFam" id="3.30.300.20:FF:000005">
    <property type="entry name" value="Transcription termination/antitermination protein NusA"/>
    <property type="match status" value="1"/>
</dbReference>
<dbReference type="Gene3D" id="3.30.300.20">
    <property type="match status" value="2"/>
</dbReference>
<dbReference type="Gene3D" id="1.10.150.20">
    <property type="entry name" value="5' to 3' exonuclease, C-terminal subdomain"/>
    <property type="match status" value="2"/>
</dbReference>
<dbReference type="Gene3D" id="2.40.50.140">
    <property type="entry name" value="Nucleic acid-binding proteins"/>
    <property type="match status" value="1"/>
</dbReference>
<dbReference type="Gene3D" id="3.30.1480.10">
    <property type="entry name" value="NusA, N-terminal domain"/>
    <property type="match status" value="1"/>
</dbReference>
<dbReference type="HAMAP" id="MF_00945_B">
    <property type="entry name" value="NusA_B"/>
    <property type="match status" value="1"/>
</dbReference>
<dbReference type="InterPro" id="IPR010995">
    <property type="entry name" value="DNA_repair_Rad51/TF_NusA_a-hlx"/>
</dbReference>
<dbReference type="InterPro" id="IPR015946">
    <property type="entry name" value="KH_dom-like_a/b"/>
</dbReference>
<dbReference type="InterPro" id="IPR025249">
    <property type="entry name" value="KH_dom_NusA-like"/>
</dbReference>
<dbReference type="InterPro" id="IPR009019">
    <property type="entry name" value="KH_sf_prok-type"/>
</dbReference>
<dbReference type="InterPro" id="IPR012340">
    <property type="entry name" value="NA-bd_OB-fold"/>
</dbReference>
<dbReference type="InterPro" id="IPR030842">
    <property type="entry name" value="NusA_bac"/>
</dbReference>
<dbReference type="InterPro" id="IPR036555">
    <property type="entry name" value="NusA_N_sf"/>
</dbReference>
<dbReference type="InterPro" id="IPR003029">
    <property type="entry name" value="S1_domain"/>
</dbReference>
<dbReference type="InterPro" id="IPR013735">
    <property type="entry name" value="TF_NusA_N"/>
</dbReference>
<dbReference type="InterPro" id="IPR010214">
    <property type="entry name" value="Tscrpt_termin_fac_NusA_C_rpt"/>
</dbReference>
<dbReference type="InterPro" id="IPR010213">
    <property type="entry name" value="Tscrpt_termination_fac_NusA"/>
</dbReference>
<dbReference type="NCBIfam" id="TIGR01953">
    <property type="entry name" value="NusA"/>
    <property type="match status" value="1"/>
</dbReference>
<dbReference type="NCBIfam" id="TIGR01954">
    <property type="entry name" value="nusA_Cterm_rpt"/>
    <property type="match status" value="2"/>
</dbReference>
<dbReference type="PANTHER" id="PTHR22648">
    <property type="entry name" value="TRANSCRIPTION TERMINATION FACTOR NUSA"/>
    <property type="match status" value="1"/>
</dbReference>
<dbReference type="PANTHER" id="PTHR22648:SF0">
    <property type="entry name" value="TRANSCRIPTION TERMINATION_ANTITERMINATION PROTEIN NUSA"/>
    <property type="match status" value="1"/>
</dbReference>
<dbReference type="Pfam" id="PF14520">
    <property type="entry name" value="HHH_5"/>
    <property type="match status" value="1"/>
</dbReference>
<dbReference type="Pfam" id="PF13184">
    <property type="entry name" value="KH_5"/>
    <property type="match status" value="1"/>
</dbReference>
<dbReference type="Pfam" id="PF08529">
    <property type="entry name" value="NusA_N"/>
    <property type="match status" value="1"/>
</dbReference>
<dbReference type="Pfam" id="PF00575">
    <property type="entry name" value="S1"/>
    <property type="match status" value="1"/>
</dbReference>
<dbReference type="SMART" id="SM00316">
    <property type="entry name" value="S1"/>
    <property type="match status" value="1"/>
</dbReference>
<dbReference type="SUPFAM" id="SSF50249">
    <property type="entry name" value="Nucleic acid-binding proteins"/>
    <property type="match status" value="1"/>
</dbReference>
<dbReference type="SUPFAM" id="SSF54814">
    <property type="entry name" value="Prokaryotic type KH domain (KH-domain type II)"/>
    <property type="match status" value="2"/>
</dbReference>
<dbReference type="SUPFAM" id="SSF47794">
    <property type="entry name" value="Rad51 N-terminal domain-like"/>
    <property type="match status" value="2"/>
</dbReference>
<dbReference type="SUPFAM" id="SSF69705">
    <property type="entry name" value="Transcription factor NusA, N-terminal domain"/>
    <property type="match status" value="1"/>
</dbReference>
<dbReference type="PROSITE" id="PS50084">
    <property type="entry name" value="KH_TYPE_1"/>
    <property type="match status" value="1"/>
</dbReference>
<dbReference type="PROSITE" id="PS50126">
    <property type="entry name" value="S1"/>
    <property type="match status" value="1"/>
</dbReference>
<protein>
    <recommendedName>
        <fullName evidence="1">Transcription termination/antitermination protein NusA</fullName>
    </recommendedName>
    <alternativeName>
        <fullName>N utilization substance protein A</fullName>
    </alternativeName>
    <alternativeName>
        <fullName evidence="24">Transcription termination/antitermination L factor</fullName>
    </alternativeName>
</protein>
<evidence type="ECO:0000255" key="1">
    <source>
        <dbReference type="HAMAP-Rule" id="MF_00945"/>
    </source>
</evidence>
<evidence type="ECO:0000269" key="2">
    <source>
    </source>
</evidence>
<evidence type="ECO:0000269" key="3">
    <source>
    </source>
</evidence>
<evidence type="ECO:0000269" key="4">
    <source>
    </source>
</evidence>
<evidence type="ECO:0000269" key="5">
    <source>
    </source>
</evidence>
<evidence type="ECO:0000269" key="6">
    <source>
    </source>
</evidence>
<evidence type="ECO:0000269" key="7">
    <source>
    </source>
</evidence>
<evidence type="ECO:0000269" key="8">
    <source>
    </source>
</evidence>
<evidence type="ECO:0000269" key="9">
    <source>
    </source>
</evidence>
<evidence type="ECO:0000269" key="10">
    <source>
    </source>
</evidence>
<evidence type="ECO:0000269" key="11">
    <source>
    </source>
</evidence>
<evidence type="ECO:0000269" key="12">
    <source>
    </source>
</evidence>
<evidence type="ECO:0000269" key="13">
    <source>
    </source>
</evidence>
<evidence type="ECO:0000269" key="14">
    <source>
    </source>
</evidence>
<evidence type="ECO:0000269" key="15">
    <source>
    </source>
</evidence>
<evidence type="ECO:0000269" key="16">
    <source>
    </source>
</evidence>
<evidence type="ECO:0000269" key="17">
    <source>
    </source>
</evidence>
<evidence type="ECO:0000269" key="18">
    <source>
    </source>
</evidence>
<evidence type="ECO:0000269" key="19">
    <source>
    </source>
</evidence>
<evidence type="ECO:0000269" key="20">
    <source>
    </source>
</evidence>
<evidence type="ECO:0000269" key="21">
    <source>
    </source>
</evidence>
<evidence type="ECO:0000269" key="22">
    <source>
    </source>
</evidence>
<evidence type="ECO:0000269" key="23">
    <source>
    </source>
</evidence>
<evidence type="ECO:0000303" key="24">
    <source>
    </source>
</evidence>
<evidence type="ECO:0000305" key="25"/>
<evidence type="ECO:0000305" key="26">
    <source>
    </source>
</evidence>
<evidence type="ECO:0007744" key="27">
    <source>
        <dbReference type="PDB" id="6IB8"/>
    </source>
</evidence>
<evidence type="ECO:0007744" key="28">
    <source>
        <dbReference type="PDB" id="6TQN"/>
    </source>
</evidence>
<evidence type="ECO:0007744" key="29">
    <source>
        <dbReference type="PDB" id="6TQO"/>
    </source>
</evidence>
<evidence type="ECO:0007829" key="30">
    <source>
        <dbReference type="PDB" id="1U9L"/>
    </source>
</evidence>
<evidence type="ECO:0007829" key="31">
    <source>
        <dbReference type="PDB" id="1WCN"/>
    </source>
</evidence>
<evidence type="ECO:0007829" key="32">
    <source>
        <dbReference type="PDB" id="2JZB"/>
    </source>
</evidence>
<evidence type="ECO:0007829" key="33">
    <source>
        <dbReference type="PDB" id="2KWP"/>
    </source>
</evidence>
<evidence type="ECO:0007829" key="34">
    <source>
        <dbReference type="PDB" id="5LM7"/>
    </source>
</evidence>
<evidence type="ECO:0007829" key="35">
    <source>
        <dbReference type="PDB" id="5LM9"/>
    </source>
</evidence>
<evidence type="ECO:0007829" key="36">
    <source>
        <dbReference type="PDB" id="6IB8"/>
    </source>
</evidence>
<evidence type="ECO:0007829" key="37">
    <source>
        <dbReference type="PDB" id="7UBN"/>
    </source>
</evidence>
<accession>P0AFF6</accession>
<accession>P03003</accession>
<accession>Q2M941</accession>